<name>LPRI_MYCBO</name>
<proteinExistence type="inferred from homology"/>
<protein>
    <recommendedName>
        <fullName evidence="1">Lipoprotein LprI</fullName>
    </recommendedName>
    <alternativeName>
        <fullName>Glycolipoprotein LprI</fullName>
    </alternativeName>
    <alternativeName>
        <fullName>Lysozyme inhibitor LprI</fullName>
    </alternativeName>
</protein>
<reference key="1">
    <citation type="journal article" date="2003" name="Proc. Natl. Acad. Sci. U.S.A.">
        <title>The complete genome sequence of Mycobacterium bovis.</title>
        <authorList>
            <person name="Garnier T."/>
            <person name="Eiglmeier K."/>
            <person name="Camus J.-C."/>
            <person name="Medina N."/>
            <person name="Mansoor H."/>
            <person name="Pryor M."/>
            <person name="Duthoy S."/>
            <person name="Grondin S."/>
            <person name="Lacroix C."/>
            <person name="Monsempe C."/>
            <person name="Simon S."/>
            <person name="Harris B."/>
            <person name="Atkin R."/>
            <person name="Doggett J."/>
            <person name="Mayes R."/>
            <person name="Keating L."/>
            <person name="Wheeler P.R."/>
            <person name="Parkhill J."/>
            <person name="Barrell B.G."/>
            <person name="Cole S.T."/>
            <person name="Gordon S.V."/>
            <person name="Hewinson R.G."/>
        </authorList>
    </citation>
    <scope>NUCLEOTIDE SEQUENCE [LARGE SCALE GENOMIC DNA]</scope>
    <source>
        <strain>ATCC BAA-935 / AF2122/97</strain>
    </source>
</reference>
<reference key="2">
    <citation type="journal article" date="2017" name="Genome Announc.">
        <title>Updated reference genome sequence and annotation of Mycobacterium bovis AF2122/97.</title>
        <authorList>
            <person name="Malone K.M."/>
            <person name="Farrell D."/>
            <person name="Stuber T.P."/>
            <person name="Schubert O.T."/>
            <person name="Aebersold R."/>
            <person name="Robbe-Austerman S."/>
            <person name="Gordon S.V."/>
        </authorList>
    </citation>
    <scope>NUCLEOTIDE SEQUENCE [LARGE SCALE GENOMIC DNA]</scope>
    <scope>GENOME REANNOTATION</scope>
    <source>
        <strain>ATCC BAA-935 / AF2122/97</strain>
    </source>
</reference>
<gene>
    <name type="primary">lprI</name>
    <name type="ordered locus">BQ2027_MB1568C</name>
</gene>
<comment type="function">
    <text evidence="1">Strongly binds and inhibits lysozyme, may help bacteria survive in lysozyme-producing host cells such as monocyte-derived macrophages.</text>
</comment>
<comment type="subunit">
    <text evidence="1">Probably a homodimer.</text>
</comment>
<comment type="subcellular location">
    <subcellularLocation>
        <location evidence="2">Cell membrane</location>
        <topology evidence="2">Lipid-anchor</topology>
    </subcellularLocation>
    <subcellularLocation>
        <location evidence="1">Secreted</location>
        <location evidence="1">Cell wall</location>
    </subcellularLocation>
    <subcellularLocation>
        <location evidence="1">Cell surface</location>
    </subcellularLocation>
</comment>
<comment type="PTM">
    <text evidence="1">Glycosylated.</text>
</comment>
<comment type="similarity">
    <text evidence="3">In the C-terminal section; belongs to the MliC family.</text>
</comment>
<feature type="signal peptide" evidence="2">
    <location>
        <begin position="1"/>
        <end position="15"/>
    </location>
</feature>
<feature type="chain" id="PRO_0000018149" description="Lipoprotein LprI">
    <location>
        <begin position="16"/>
        <end position="197"/>
    </location>
</feature>
<feature type="lipid moiety-binding region" description="N-palmitoyl cysteine" evidence="2">
    <location>
        <position position="16"/>
    </location>
</feature>
<feature type="lipid moiety-binding region" description="S-diacylglycerol cysteine" evidence="2">
    <location>
        <position position="16"/>
    </location>
</feature>
<sequence>MRWIGVLVTALVLSACAANPPANTTSPTAGQSLDCTKPATIVQQLVCHDRQLTSLDHRLSTAYQQALAHRRSAALEAAQSSWTMLRDACAQDTDPRTCVQEAYQTRLVQLAIADPATATPPVLTYRCPTQDGPLTAQFYNQFDPKTAVLNWKGDQVIVFVELSGSGARYGRQGIEYWEHQGEVRLDFHGATFVCRTS</sequence>
<dbReference type="EMBL" id="LT708304">
    <property type="protein sequence ID" value="SIU00171.1"/>
    <property type="molecule type" value="Genomic_DNA"/>
</dbReference>
<dbReference type="RefSeq" id="NP_855220.1">
    <property type="nucleotide sequence ID" value="NC_002945.3"/>
</dbReference>
<dbReference type="RefSeq" id="WP_003407725.1">
    <property type="nucleotide sequence ID" value="NC_002945.4"/>
</dbReference>
<dbReference type="SMR" id="P65319"/>
<dbReference type="KEGG" id="mbo:BQ2027_MB1568C"/>
<dbReference type="PATRIC" id="fig|233413.5.peg.1714"/>
<dbReference type="Proteomes" id="UP000001419">
    <property type="component" value="Chromosome"/>
</dbReference>
<dbReference type="GO" id="GO:0009986">
    <property type="term" value="C:cell surface"/>
    <property type="evidence" value="ECO:0007669"/>
    <property type="project" value="UniProtKB-SubCell"/>
</dbReference>
<dbReference type="GO" id="GO:0005576">
    <property type="term" value="C:extracellular region"/>
    <property type="evidence" value="ECO:0007669"/>
    <property type="project" value="UniProtKB-KW"/>
</dbReference>
<dbReference type="GO" id="GO:0005886">
    <property type="term" value="C:plasma membrane"/>
    <property type="evidence" value="ECO:0007669"/>
    <property type="project" value="UniProtKB-SubCell"/>
</dbReference>
<dbReference type="Gene3D" id="1.20.1270.180">
    <property type="match status" value="1"/>
</dbReference>
<dbReference type="Gene3D" id="2.40.128.200">
    <property type="match status" value="1"/>
</dbReference>
<dbReference type="InterPro" id="IPR009739">
    <property type="entry name" value="LprI-like_N"/>
</dbReference>
<dbReference type="InterPro" id="IPR052755">
    <property type="entry name" value="Lysozyme_Inhibitor_LprI"/>
</dbReference>
<dbReference type="InterPro" id="IPR018660">
    <property type="entry name" value="MliC"/>
</dbReference>
<dbReference type="InterPro" id="IPR036328">
    <property type="entry name" value="MliC_sf"/>
</dbReference>
<dbReference type="PANTHER" id="PTHR37549">
    <property type="entry name" value="LIPOPROTEIN LPRI"/>
    <property type="match status" value="1"/>
</dbReference>
<dbReference type="PANTHER" id="PTHR37549:SF1">
    <property type="entry name" value="LIPOPROTEIN LPRI"/>
    <property type="match status" value="1"/>
</dbReference>
<dbReference type="Pfam" id="PF07007">
    <property type="entry name" value="LprI"/>
    <property type="match status" value="1"/>
</dbReference>
<dbReference type="Pfam" id="PF09864">
    <property type="entry name" value="MliC"/>
    <property type="match status" value="1"/>
</dbReference>
<dbReference type="SUPFAM" id="SSF141488">
    <property type="entry name" value="YdhA-like"/>
    <property type="match status" value="1"/>
</dbReference>
<dbReference type="PROSITE" id="PS51257">
    <property type="entry name" value="PROKAR_LIPOPROTEIN"/>
    <property type="match status" value="1"/>
</dbReference>
<keyword id="KW-1003">Cell membrane</keyword>
<keyword id="KW-0134">Cell wall</keyword>
<keyword id="KW-0325">Glycoprotein</keyword>
<keyword id="KW-0449">Lipoprotein</keyword>
<keyword id="KW-0472">Membrane</keyword>
<keyword id="KW-0564">Palmitate</keyword>
<keyword id="KW-1185">Reference proteome</keyword>
<keyword id="KW-0964">Secreted</keyword>
<keyword id="KW-0732">Signal</keyword>
<evidence type="ECO:0000250" key="1">
    <source>
        <dbReference type="UniProtKB" id="P9WK41"/>
    </source>
</evidence>
<evidence type="ECO:0000255" key="2">
    <source>
        <dbReference type="PROSITE-ProRule" id="PRU00303"/>
    </source>
</evidence>
<evidence type="ECO:0000305" key="3"/>
<accession>P65319</accession>
<accession>A0A1R3XYK9</accession>
<accession>Q10785</accession>
<accession>X2BI97</accession>
<organism>
    <name type="scientific">Mycobacterium bovis (strain ATCC BAA-935 / AF2122/97)</name>
    <dbReference type="NCBI Taxonomy" id="233413"/>
    <lineage>
        <taxon>Bacteria</taxon>
        <taxon>Bacillati</taxon>
        <taxon>Actinomycetota</taxon>
        <taxon>Actinomycetes</taxon>
        <taxon>Mycobacteriales</taxon>
        <taxon>Mycobacteriaceae</taxon>
        <taxon>Mycobacterium</taxon>
        <taxon>Mycobacterium tuberculosis complex</taxon>
    </lineage>
</organism>